<sequence length="334" mass="37314">MKKNQFLKESDVTAESVFFMKRRQVLKALGISAAALSLPHAAHADLLSWFKGNDRPPAPAGKPLEFSKPAAWQNNLPLTPADKVSGYNNFYEFGLDKADPAANAGSLKTDPWTLKISGEVAKPLTLDHDDLTRRFPLEERIYRMRCVEAWSMVVPWIGFPLHKLLALAEPTSNAKYVAFETIYAPEQMPGQQDRFIGGGLKYPYVEGLRLDEAMHPLTLMTVGVYGKALPPQNGAPVRLIVPWKYGFKGIKSIVSIKLTSERPPTTWNLAAPDEYGFYANVNPHVDHPRWSQATERFIGSGGILDVQRQPTLLFNGYADQVASLYRGLDLRENF</sequence>
<dbReference type="EC" id="1.8.5.-" evidence="1"/>
<dbReference type="EMBL" id="FM180568">
    <property type="protein sequence ID" value="CAS09630.1"/>
    <property type="molecule type" value="Genomic_DNA"/>
</dbReference>
<dbReference type="RefSeq" id="WP_000740095.1">
    <property type="nucleotide sequence ID" value="NC_011601.1"/>
</dbReference>
<dbReference type="SMR" id="B7USY1"/>
<dbReference type="KEGG" id="ecg:E2348C_2082"/>
<dbReference type="HOGENOM" id="CLU_045520_0_0_6"/>
<dbReference type="Proteomes" id="UP000008205">
    <property type="component" value="Chromosome"/>
</dbReference>
<dbReference type="GO" id="GO:0042597">
    <property type="term" value="C:periplasmic space"/>
    <property type="evidence" value="ECO:0007669"/>
    <property type="project" value="UniProtKB-SubCell"/>
</dbReference>
<dbReference type="GO" id="GO:0046872">
    <property type="term" value="F:metal ion binding"/>
    <property type="evidence" value="ECO:0007669"/>
    <property type="project" value="UniProtKB-KW"/>
</dbReference>
<dbReference type="GO" id="GO:0043546">
    <property type="term" value="F:molybdopterin cofactor binding"/>
    <property type="evidence" value="ECO:0007669"/>
    <property type="project" value="UniProtKB-UniRule"/>
</dbReference>
<dbReference type="GO" id="GO:0016672">
    <property type="term" value="F:oxidoreductase activity, acting on a sulfur group of donors, quinone or similar compound as acceptor"/>
    <property type="evidence" value="ECO:0007669"/>
    <property type="project" value="UniProtKB-UniRule"/>
</dbReference>
<dbReference type="GO" id="GO:0030091">
    <property type="term" value="P:protein repair"/>
    <property type="evidence" value="ECO:0007669"/>
    <property type="project" value="UniProtKB-UniRule"/>
</dbReference>
<dbReference type="CDD" id="cd02107">
    <property type="entry name" value="YedY_like_Moco"/>
    <property type="match status" value="1"/>
</dbReference>
<dbReference type="FunFam" id="3.90.420.10:FF:000001">
    <property type="entry name" value="Protein-methionine-sulfoxide reductase catalytic subunit MsrP"/>
    <property type="match status" value="1"/>
</dbReference>
<dbReference type="Gene3D" id="3.90.420.10">
    <property type="entry name" value="Oxidoreductase, molybdopterin-binding domain"/>
    <property type="match status" value="1"/>
</dbReference>
<dbReference type="HAMAP" id="MF_01206">
    <property type="entry name" value="MsrP"/>
    <property type="match status" value="1"/>
</dbReference>
<dbReference type="InterPro" id="IPR022867">
    <property type="entry name" value="MsrP"/>
</dbReference>
<dbReference type="InterPro" id="IPR000572">
    <property type="entry name" value="OxRdtase_Mopterin-bd_dom"/>
</dbReference>
<dbReference type="InterPro" id="IPR036374">
    <property type="entry name" value="OxRdtase_Mopterin-bd_sf"/>
</dbReference>
<dbReference type="InterPro" id="IPR006311">
    <property type="entry name" value="TAT_signal"/>
</dbReference>
<dbReference type="NCBIfam" id="NF003767">
    <property type="entry name" value="PRK05363.1"/>
    <property type="match status" value="1"/>
</dbReference>
<dbReference type="PANTHER" id="PTHR43032">
    <property type="entry name" value="PROTEIN-METHIONINE-SULFOXIDE REDUCTASE"/>
    <property type="match status" value="1"/>
</dbReference>
<dbReference type="PANTHER" id="PTHR43032:SF3">
    <property type="entry name" value="PROTEIN-METHIONINE-SULFOXIDE REDUCTASE CATALYTIC SUBUNIT MSRP"/>
    <property type="match status" value="1"/>
</dbReference>
<dbReference type="Pfam" id="PF00174">
    <property type="entry name" value="Oxidored_molyb"/>
    <property type="match status" value="1"/>
</dbReference>
<dbReference type="SUPFAM" id="SSF56524">
    <property type="entry name" value="Oxidoreductase molybdopterin-binding domain"/>
    <property type="match status" value="1"/>
</dbReference>
<dbReference type="PROSITE" id="PS51318">
    <property type="entry name" value="TAT"/>
    <property type="match status" value="1"/>
</dbReference>
<comment type="function">
    <text evidence="1">Part of the MsrPQ system that repairs oxidized periplasmic proteins containing methionine sulfoxide residues (Met-O), using respiratory chain electrons. Thus protects these proteins from oxidative-stress damage caused by reactive species of oxygen and chlorine generated by the host defense mechanisms. MsrPQ is essential for the maintenance of envelope integrity under bleach stress, rescuing a wide series of structurally unrelated periplasmic proteins from methionine oxidation, including the primary periplasmic chaperone SurA and the lipoprotein Pal. The catalytic subunit MsrP is non-stereospecific, being able to reduce both (R-) and (S-) diastereoisomers of methionine sulfoxide.</text>
</comment>
<comment type="catalytic activity">
    <reaction evidence="1">
        <text>L-methionyl-[protein] + a quinone + H2O = L-methionyl-(S)-S-oxide-[protein] + a quinol</text>
        <dbReference type="Rhea" id="RHEA:51292"/>
        <dbReference type="Rhea" id="RHEA-COMP:12313"/>
        <dbReference type="Rhea" id="RHEA-COMP:12315"/>
        <dbReference type="ChEBI" id="CHEBI:15377"/>
        <dbReference type="ChEBI" id="CHEBI:16044"/>
        <dbReference type="ChEBI" id="CHEBI:24646"/>
        <dbReference type="ChEBI" id="CHEBI:44120"/>
        <dbReference type="ChEBI" id="CHEBI:132124"/>
    </reaction>
</comment>
<comment type="catalytic activity">
    <reaction evidence="1">
        <text>L-methionyl-[protein] + a quinone + H2O = L-methionyl-(R)-S-oxide-[protein] + a quinol</text>
        <dbReference type="Rhea" id="RHEA:51296"/>
        <dbReference type="Rhea" id="RHEA-COMP:12313"/>
        <dbReference type="Rhea" id="RHEA-COMP:12314"/>
        <dbReference type="ChEBI" id="CHEBI:15377"/>
        <dbReference type="ChEBI" id="CHEBI:16044"/>
        <dbReference type="ChEBI" id="CHEBI:24646"/>
        <dbReference type="ChEBI" id="CHEBI:45764"/>
        <dbReference type="ChEBI" id="CHEBI:132124"/>
    </reaction>
</comment>
<comment type="cofactor">
    <cofactor evidence="1">
        <name>Mo-molybdopterin</name>
        <dbReference type="ChEBI" id="CHEBI:71302"/>
    </cofactor>
    <text evidence="1">Binds 1 Mo-molybdopterin (Mo-MPT) cofactor per subunit.</text>
</comment>
<comment type="subunit">
    <text evidence="1">Heterodimer of a catalytic subunit (MsrP) and a heme-binding subunit (MsrQ).</text>
</comment>
<comment type="subcellular location">
    <subcellularLocation>
        <location evidence="1">Periplasm</location>
    </subcellularLocation>
    <text evidence="1">Is attached to the inner membrane when interacting with the MsrQ subunit.</text>
</comment>
<comment type="PTM">
    <text evidence="1">Predicted to be exported by the Tat system. The position of the signal peptide cleavage has not been experimentally proven.</text>
</comment>
<comment type="similarity">
    <text evidence="1">Belongs to the MsrP family.</text>
</comment>
<reference key="1">
    <citation type="journal article" date="2009" name="J. Bacteriol.">
        <title>Complete genome sequence and comparative genome analysis of enteropathogenic Escherichia coli O127:H6 strain E2348/69.</title>
        <authorList>
            <person name="Iguchi A."/>
            <person name="Thomson N.R."/>
            <person name="Ogura Y."/>
            <person name="Saunders D."/>
            <person name="Ooka T."/>
            <person name="Henderson I.R."/>
            <person name="Harris D."/>
            <person name="Asadulghani M."/>
            <person name="Kurokawa K."/>
            <person name="Dean P."/>
            <person name="Kenny B."/>
            <person name="Quail M.A."/>
            <person name="Thurston S."/>
            <person name="Dougan G."/>
            <person name="Hayashi T."/>
            <person name="Parkhill J."/>
            <person name="Frankel G."/>
        </authorList>
    </citation>
    <scope>NUCLEOTIDE SEQUENCE [LARGE SCALE GENOMIC DNA]</scope>
    <source>
        <strain>E2348/69 / EPEC</strain>
    </source>
</reference>
<keyword id="KW-0479">Metal-binding</keyword>
<keyword id="KW-0500">Molybdenum</keyword>
<keyword id="KW-0560">Oxidoreductase</keyword>
<keyword id="KW-0574">Periplasm</keyword>
<keyword id="KW-1185">Reference proteome</keyword>
<keyword id="KW-0732">Signal</keyword>
<protein>
    <recommendedName>
        <fullName evidence="1">Protein-methionine-sulfoxide reductase catalytic subunit MsrP</fullName>
        <ecNumber evidence="1">1.8.5.-</ecNumber>
    </recommendedName>
</protein>
<name>MSRP_ECO27</name>
<feature type="signal peptide" description="Tat-type signal" evidence="1">
    <location>
        <begin position="1"/>
        <end position="44"/>
    </location>
</feature>
<feature type="chain" id="PRO_1000164656" description="Protein-methionine-sulfoxide reductase catalytic subunit MsrP" evidence="1">
    <location>
        <begin position="45"/>
        <end position="334"/>
    </location>
</feature>
<feature type="binding site" evidence="1">
    <location>
        <position position="88"/>
    </location>
    <ligand>
        <name>Mo-molybdopterin</name>
        <dbReference type="ChEBI" id="CHEBI:71302"/>
    </ligand>
</feature>
<feature type="binding site" evidence="1">
    <location>
        <begin position="91"/>
        <end position="92"/>
    </location>
    <ligand>
        <name>Mo-molybdopterin</name>
        <dbReference type="ChEBI" id="CHEBI:71302"/>
    </ligand>
</feature>
<feature type="binding site" evidence="1">
    <location>
        <position position="146"/>
    </location>
    <ligand>
        <name>Mo-molybdopterin</name>
        <dbReference type="ChEBI" id="CHEBI:71302"/>
    </ligand>
    <ligandPart>
        <name>Mo</name>
        <dbReference type="ChEBI" id="CHEBI:28685"/>
    </ligandPart>
</feature>
<feature type="binding site" evidence="1">
    <location>
        <position position="181"/>
    </location>
    <ligand>
        <name>Mo-molybdopterin</name>
        <dbReference type="ChEBI" id="CHEBI:71302"/>
    </ligand>
</feature>
<feature type="binding site" evidence="1">
    <location>
        <position position="233"/>
    </location>
    <ligand>
        <name>Mo-molybdopterin</name>
        <dbReference type="ChEBI" id="CHEBI:71302"/>
    </ligand>
</feature>
<feature type="binding site" evidence="1">
    <location>
        <position position="238"/>
    </location>
    <ligand>
        <name>Mo-molybdopterin</name>
        <dbReference type="ChEBI" id="CHEBI:71302"/>
    </ligand>
</feature>
<feature type="binding site" evidence="1">
    <location>
        <begin position="249"/>
        <end position="251"/>
    </location>
    <ligand>
        <name>Mo-molybdopterin</name>
        <dbReference type="ChEBI" id="CHEBI:71302"/>
    </ligand>
</feature>
<proteinExistence type="inferred from homology"/>
<gene>
    <name evidence="1" type="primary">msrP</name>
    <name type="ordered locus">E2348C_2082</name>
</gene>
<evidence type="ECO:0000255" key="1">
    <source>
        <dbReference type="HAMAP-Rule" id="MF_01206"/>
    </source>
</evidence>
<accession>B7USY1</accession>
<organism>
    <name type="scientific">Escherichia coli O127:H6 (strain E2348/69 / EPEC)</name>
    <dbReference type="NCBI Taxonomy" id="574521"/>
    <lineage>
        <taxon>Bacteria</taxon>
        <taxon>Pseudomonadati</taxon>
        <taxon>Pseudomonadota</taxon>
        <taxon>Gammaproteobacteria</taxon>
        <taxon>Enterobacterales</taxon>
        <taxon>Enterobacteriaceae</taxon>
        <taxon>Escherichia</taxon>
    </lineage>
</organism>